<dbReference type="EMBL" id="AE001579">
    <property type="protein sequence ID" value="AAF07597.1"/>
    <property type="molecule type" value="Genomic_DNA"/>
</dbReference>
<dbReference type="RefSeq" id="NP_051361.1">
    <property type="nucleotide sequence ID" value="NC_000952.1"/>
</dbReference>
<dbReference type="RefSeq" id="WP_010883847.1">
    <property type="nucleotide sequence ID" value="NC_000952.1"/>
</dbReference>
<dbReference type="SMR" id="Q9S083"/>
<dbReference type="EnsemblBacteria" id="AAF07597">
    <property type="protein sequence ID" value="AAF07597"/>
    <property type="gene ID" value="BB_O28"/>
</dbReference>
<dbReference type="KEGG" id="bbu:BB_O28"/>
<dbReference type="PATRIC" id="fig|224326.49.peg.198"/>
<dbReference type="HOGENOM" id="CLU_134260_0_0_12"/>
<dbReference type="OrthoDB" id="351076at2"/>
<dbReference type="Proteomes" id="UP000001807">
    <property type="component" value="Plasmid cp32-7"/>
</dbReference>
<dbReference type="GO" id="GO:0009279">
    <property type="term" value="C:cell outer membrane"/>
    <property type="evidence" value="ECO:0007669"/>
    <property type="project" value="UniProtKB-SubCell"/>
</dbReference>
<dbReference type="InterPro" id="IPR004983">
    <property type="entry name" value="Mlp"/>
</dbReference>
<dbReference type="Pfam" id="PF03304">
    <property type="entry name" value="Mlp"/>
    <property type="match status" value="1"/>
</dbReference>
<proteinExistence type="evidence at transcript level"/>
<name>MLPG_BORBU</name>
<gene>
    <name evidence="3" type="primary">mlpG</name>
    <name type="ordered locus">BB_O28</name>
</gene>
<protein>
    <recommendedName>
        <fullName evidence="3">Lipoprotein MlpG</fullName>
    </recommendedName>
</protein>
<organism>
    <name type="scientific">Borreliella burgdorferi (strain ATCC 35210 / DSM 4680 / CIP 102532 / B31)</name>
    <name type="common">Borrelia burgdorferi</name>
    <dbReference type="NCBI Taxonomy" id="224326"/>
    <lineage>
        <taxon>Bacteria</taxon>
        <taxon>Pseudomonadati</taxon>
        <taxon>Spirochaetota</taxon>
        <taxon>Spirochaetia</taxon>
        <taxon>Spirochaetales</taxon>
        <taxon>Borreliaceae</taxon>
        <taxon>Borreliella</taxon>
    </lineage>
</organism>
<geneLocation type="plasmid">
    <name>cp32-7</name>
</geneLocation>
<feature type="signal peptide" evidence="4">
    <location>
        <begin position="1"/>
        <end position="17"/>
    </location>
</feature>
<feature type="chain" id="PRO_5004333248" description="Lipoprotein MlpG" evidence="4">
    <location>
        <begin position="18"/>
        <end position="140"/>
    </location>
</feature>
<feature type="region of interest" description="Disordered" evidence="1">
    <location>
        <begin position="22"/>
        <end position="57"/>
    </location>
</feature>
<feature type="compositionally biased region" description="Basic and acidic residues" evidence="1">
    <location>
        <begin position="33"/>
        <end position="57"/>
    </location>
</feature>
<feature type="lipid moiety-binding region" description="N-palmitoyl cysteine" evidence="4">
    <location>
        <position position="18"/>
    </location>
</feature>
<feature type="lipid moiety-binding region" description="S-diacylglycerol cysteine" evidence="4">
    <location>
        <position position="18"/>
    </location>
</feature>
<comment type="function">
    <text evidence="2 5">An outer membrane protein that may participate in pathogenesis. Some human Lyme disease patients have antibodies against this protein (PubMed:10948116). The Mlp proteins probably undergo intragenic recombination, generating new alleles (Probable).</text>
</comment>
<comment type="subcellular location">
    <subcellularLocation>
        <location evidence="5">Cell outer membrane</location>
        <topology evidence="5">Lipid-anchor</topology>
    </subcellularLocation>
</comment>
<comment type="induction">
    <text evidence="2">Weakly induced when grown at 35 degrees Celsius.</text>
</comment>
<comment type="similarity">
    <text evidence="4">Belongs to the Multicopy lipoprotein (Mlp) family.</text>
</comment>
<evidence type="ECO:0000256" key="1">
    <source>
        <dbReference type="SAM" id="MobiDB-lite"/>
    </source>
</evidence>
<evidence type="ECO:0000269" key="2">
    <source>
    </source>
</evidence>
<evidence type="ECO:0000303" key="3">
    <source>
    </source>
</evidence>
<evidence type="ECO:0000305" key="4"/>
<evidence type="ECO:0000305" key="5">
    <source>
    </source>
</evidence>
<sequence>MKIINILFCLFLLMLNGCNSNDTNTKQTKSRQKRDLTQKEATQEKPKSKSKEDLLREKLSDDQKTQLDWLKTALTGVGKFDKFLENDEGKIKSALEHIKTELDKCNGNDEGKNTFKTTVQGFFSGGNIDNFADQATATCN</sequence>
<keyword id="KW-0998">Cell outer membrane</keyword>
<keyword id="KW-0449">Lipoprotein</keyword>
<keyword id="KW-0472">Membrane</keyword>
<keyword id="KW-0564">Palmitate</keyword>
<keyword id="KW-0614">Plasmid</keyword>
<keyword id="KW-1185">Reference proteome</keyword>
<keyword id="KW-0732">Signal</keyword>
<reference key="1">
    <citation type="journal article" date="1997" name="Nature">
        <title>Genomic sequence of a Lyme disease spirochaete, Borrelia burgdorferi.</title>
        <authorList>
            <person name="Fraser C.M."/>
            <person name="Casjens S."/>
            <person name="Huang W.M."/>
            <person name="Sutton G.G."/>
            <person name="Clayton R.A."/>
            <person name="Lathigra R."/>
            <person name="White O."/>
            <person name="Ketchum K.A."/>
            <person name="Dodson R.J."/>
            <person name="Hickey E.K."/>
            <person name="Gwinn M.L."/>
            <person name="Dougherty B.A."/>
            <person name="Tomb J.-F."/>
            <person name="Fleischmann R.D."/>
            <person name="Richardson D.L."/>
            <person name="Peterson J.D."/>
            <person name="Kerlavage A.R."/>
            <person name="Quackenbush J."/>
            <person name="Salzberg S.L."/>
            <person name="Hanson M."/>
            <person name="van Vugt R."/>
            <person name="Palmer N."/>
            <person name="Adams M.D."/>
            <person name="Gocayne J.D."/>
            <person name="Weidman J.F."/>
            <person name="Utterback T.R."/>
            <person name="Watthey L."/>
            <person name="McDonald L.A."/>
            <person name="Artiach P."/>
            <person name="Bowman C."/>
            <person name="Garland S.A."/>
            <person name="Fujii C."/>
            <person name="Cotton M.D."/>
            <person name="Horst K."/>
            <person name="Roberts K.M."/>
            <person name="Hatch B."/>
            <person name="Smith H.O."/>
            <person name="Venter J.C."/>
        </authorList>
    </citation>
    <scope>NUCLEOTIDE SEQUENCE [LARGE SCALE GENOMIC DNA]</scope>
    <source>
        <strain>ATCC 35210 / DSM 4680 / CIP 102532 / B31</strain>
    </source>
</reference>
<reference key="2">
    <citation type="journal article" date="2000" name="Mol. Microbiol.">
        <title>A bacterial genome in flux: the twelve linear and nine circular extrachromosomal DNAs in an infectious isolate of the Lyme disease spirochete Borrelia burgdorferi.</title>
        <authorList>
            <person name="Casjens S."/>
            <person name="Palmer N."/>
            <person name="van Vugt R."/>
            <person name="Huang W.M."/>
            <person name="Stevenson B."/>
            <person name="Rosa P."/>
            <person name="Lathigra R."/>
            <person name="Sutton G.G."/>
            <person name="Peterson J.D."/>
            <person name="Dodson R.J."/>
            <person name="Haft D.H."/>
            <person name="Hickey E.K."/>
            <person name="Gwinn M.L."/>
            <person name="White O."/>
            <person name="Fraser C.M."/>
        </authorList>
    </citation>
    <scope>NUCLEOTIDE SEQUENCE [LARGE SCALE GENOMIC DNA]</scope>
    <source>
        <strain>ATCC 35210 / DSM 4680 / CIP 102532 / B31</strain>
    </source>
</reference>
<reference key="3">
    <citation type="journal article" date="2000" name="Infect. Immun.">
        <title>Expression and immunological analysis of the plasmid-borne mlp genes of Borrelia burgdorferi strain B31.</title>
        <authorList>
            <person name="Porcella S.F."/>
            <person name="Fitzpatrick C.A."/>
            <person name="Bono J.L."/>
        </authorList>
    </citation>
    <scope>FUNCTION</scope>
    <scope>ANTIGENICITY</scope>
    <scope>SUBCELLULAR LOCATION</scope>
    <scope>INDUCTION AT 35 DEGREES CELSIUS</scope>
    <source>
        <strain>B31-4A</strain>
        <plasmid>cp32-7</plasmid>
    </source>
</reference>
<accession>Q9S083</accession>